<comment type="function">
    <text evidence="1">Removes the formyl group from the N-terminal Met of newly synthesized proteins. Requires at least a dipeptide for an efficient rate of reaction. N-terminal L-methionine is a prerequisite for activity but the enzyme has broad specificity at other positions.</text>
</comment>
<comment type="catalytic activity">
    <reaction evidence="1">
        <text>N-terminal N-formyl-L-methionyl-[peptide] + H2O = N-terminal L-methionyl-[peptide] + formate</text>
        <dbReference type="Rhea" id="RHEA:24420"/>
        <dbReference type="Rhea" id="RHEA-COMP:10639"/>
        <dbReference type="Rhea" id="RHEA-COMP:10640"/>
        <dbReference type="ChEBI" id="CHEBI:15377"/>
        <dbReference type="ChEBI" id="CHEBI:15740"/>
        <dbReference type="ChEBI" id="CHEBI:49298"/>
        <dbReference type="ChEBI" id="CHEBI:64731"/>
        <dbReference type="EC" id="3.5.1.88"/>
    </reaction>
</comment>
<comment type="cofactor">
    <cofactor evidence="1">
        <name>Fe(2+)</name>
        <dbReference type="ChEBI" id="CHEBI:29033"/>
    </cofactor>
    <text evidence="1">Binds 1 Fe(2+) ion.</text>
</comment>
<comment type="similarity">
    <text evidence="1">Belongs to the polypeptide deformylase family.</text>
</comment>
<keyword id="KW-0378">Hydrolase</keyword>
<keyword id="KW-0408">Iron</keyword>
<keyword id="KW-0479">Metal-binding</keyword>
<keyword id="KW-0648">Protein biosynthesis</keyword>
<dbReference type="EC" id="3.5.1.88" evidence="1"/>
<dbReference type="EMBL" id="AM421808">
    <property type="protein sequence ID" value="CAM09421.1"/>
    <property type="molecule type" value="Genomic_DNA"/>
</dbReference>
<dbReference type="RefSeq" id="WP_002216218.1">
    <property type="nucleotide sequence ID" value="NC_008767.1"/>
</dbReference>
<dbReference type="SMR" id="A1KRE5"/>
<dbReference type="GeneID" id="93387182"/>
<dbReference type="KEGG" id="nmc:NMC0102"/>
<dbReference type="HOGENOM" id="CLU_061901_2_1_4"/>
<dbReference type="Proteomes" id="UP000002286">
    <property type="component" value="Chromosome"/>
</dbReference>
<dbReference type="GO" id="GO:0046872">
    <property type="term" value="F:metal ion binding"/>
    <property type="evidence" value="ECO:0007669"/>
    <property type="project" value="UniProtKB-KW"/>
</dbReference>
<dbReference type="GO" id="GO:0042586">
    <property type="term" value="F:peptide deformylase activity"/>
    <property type="evidence" value="ECO:0007669"/>
    <property type="project" value="UniProtKB-UniRule"/>
</dbReference>
<dbReference type="GO" id="GO:0043686">
    <property type="term" value="P:co-translational protein modification"/>
    <property type="evidence" value="ECO:0007669"/>
    <property type="project" value="TreeGrafter"/>
</dbReference>
<dbReference type="GO" id="GO:0006412">
    <property type="term" value="P:translation"/>
    <property type="evidence" value="ECO:0007669"/>
    <property type="project" value="UniProtKB-UniRule"/>
</dbReference>
<dbReference type="CDD" id="cd00487">
    <property type="entry name" value="Pep_deformylase"/>
    <property type="match status" value="1"/>
</dbReference>
<dbReference type="FunFam" id="3.90.45.10:FF:000001">
    <property type="entry name" value="Peptide deformylase"/>
    <property type="match status" value="1"/>
</dbReference>
<dbReference type="Gene3D" id="3.90.45.10">
    <property type="entry name" value="Peptide deformylase"/>
    <property type="match status" value="1"/>
</dbReference>
<dbReference type="HAMAP" id="MF_00163">
    <property type="entry name" value="Pep_deformylase"/>
    <property type="match status" value="1"/>
</dbReference>
<dbReference type="InterPro" id="IPR023635">
    <property type="entry name" value="Peptide_deformylase"/>
</dbReference>
<dbReference type="InterPro" id="IPR036821">
    <property type="entry name" value="Peptide_deformylase_sf"/>
</dbReference>
<dbReference type="NCBIfam" id="TIGR00079">
    <property type="entry name" value="pept_deformyl"/>
    <property type="match status" value="1"/>
</dbReference>
<dbReference type="NCBIfam" id="NF001159">
    <property type="entry name" value="PRK00150.1-3"/>
    <property type="match status" value="1"/>
</dbReference>
<dbReference type="PANTHER" id="PTHR10458">
    <property type="entry name" value="PEPTIDE DEFORMYLASE"/>
    <property type="match status" value="1"/>
</dbReference>
<dbReference type="PANTHER" id="PTHR10458:SF22">
    <property type="entry name" value="PEPTIDE DEFORMYLASE"/>
    <property type="match status" value="1"/>
</dbReference>
<dbReference type="Pfam" id="PF01327">
    <property type="entry name" value="Pep_deformylase"/>
    <property type="match status" value="1"/>
</dbReference>
<dbReference type="PIRSF" id="PIRSF004749">
    <property type="entry name" value="Pep_def"/>
    <property type="match status" value="1"/>
</dbReference>
<dbReference type="PRINTS" id="PR01576">
    <property type="entry name" value="PDEFORMYLASE"/>
</dbReference>
<dbReference type="SUPFAM" id="SSF56420">
    <property type="entry name" value="Peptide deformylase"/>
    <property type="match status" value="1"/>
</dbReference>
<proteinExistence type="inferred from homology"/>
<sequence length="167" mass="19115">MALLNILQYPDERLHTVAKPVEQVDERIRKLIADMFETMYESRGIGLAATQVDVHERVVVMDLTEDRSEPRVFINPVIVEKDGETTYEEGCLSVPGIYDTVTRAERVKVEALNEKGEKFTLEADGLLAICVQHELDHLMGIVFVERLSQLKQGRIKTKLKKRQKHTI</sequence>
<evidence type="ECO:0000255" key="1">
    <source>
        <dbReference type="HAMAP-Rule" id="MF_00163"/>
    </source>
</evidence>
<feature type="chain" id="PRO_0000301067" description="Peptide deformylase">
    <location>
        <begin position="1"/>
        <end position="167"/>
    </location>
</feature>
<feature type="active site" evidence="1">
    <location>
        <position position="134"/>
    </location>
</feature>
<feature type="binding site" evidence="1">
    <location>
        <position position="91"/>
    </location>
    <ligand>
        <name>Fe cation</name>
        <dbReference type="ChEBI" id="CHEBI:24875"/>
    </ligand>
</feature>
<feature type="binding site" evidence="1">
    <location>
        <position position="133"/>
    </location>
    <ligand>
        <name>Fe cation</name>
        <dbReference type="ChEBI" id="CHEBI:24875"/>
    </ligand>
</feature>
<feature type="binding site" evidence="1">
    <location>
        <position position="137"/>
    </location>
    <ligand>
        <name>Fe cation</name>
        <dbReference type="ChEBI" id="CHEBI:24875"/>
    </ligand>
</feature>
<gene>
    <name evidence="1" type="primary">def</name>
    <name type="ordered locus">NMC0102</name>
</gene>
<protein>
    <recommendedName>
        <fullName evidence="1">Peptide deformylase</fullName>
        <shortName evidence="1">PDF</shortName>
        <ecNumber evidence="1">3.5.1.88</ecNumber>
    </recommendedName>
    <alternativeName>
        <fullName evidence="1">Polypeptide deformylase</fullName>
    </alternativeName>
</protein>
<accession>A1KRE5</accession>
<organism>
    <name type="scientific">Neisseria meningitidis serogroup C / serotype 2a (strain ATCC 700532 / DSM 15464 / FAM18)</name>
    <dbReference type="NCBI Taxonomy" id="272831"/>
    <lineage>
        <taxon>Bacteria</taxon>
        <taxon>Pseudomonadati</taxon>
        <taxon>Pseudomonadota</taxon>
        <taxon>Betaproteobacteria</taxon>
        <taxon>Neisseriales</taxon>
        <taxon>Neisseriaceae</taxon>
        <taxon>Neisseria</taxon>
    </lineage>
</organism>
<name>DEF_NEIMF</name>
<reference key="1">
    <citation type="journal article" date="2007" name="PLoS Genet.">
        <title>Meningococcal genetic variation mechanisms viewed through comparative analysis of serogroup C strain FAM18.</title>
        <authorList>
            <person name="Bentley S.D."/>
            <person name="Vernikos G.S."/>
            <person name="Snyder L.A.S."/>
            <person name="Churcher C."/>
            <person name="Arrowsmith C."/>
            <person name="Chillingworth T."/>
            <person name="Cronin A."/>
            <person name="Davis P.H."/>
            <person name="Holroyd N.E."/>
            <person name="Jagels K."/>
            <person name="Maddison M."/>
            <person name="Moule S."/>
            <person name="Rabbinowitsch E."/>
            <person name="Sharp S."/>
            <person name="Unwin L."/>
            <person name="Whitehead S."/>
            <person name="Quail M.A."/>
            <person name="Achtman M."/>
            <person name="Barrell B.G."/>
            <person name="Saunders N.J."/>
            <person name="Parkhill J."/>
        </authorList>
    </citation>
    <scope>NUCLEOTIDE SEQUENCE [LARGE SCALE GENOMIC DNA]</scope>
    <source>
        <strain>ATCC 700532 / DSM 15464 / FAM18</strain>
    </source>
</reference>